<protein>
    <recommendedName>
        <fullName>DNA topoisomerase 2</fullName>
        <ecNumber evidence="3">5.6.2.2</ecNumber>
    </recommendedName>
    <alternativeName>
        <fullName>DNA topoisomerase II</fullName>
    </alternativeName>
</protein>
<dbReference type="EC" id="5.6.2.2" evidence="3"/>
<dbReference type="EMBL" id="M26803">
    <property type="protein sequence ID" value="AAA30256.1"/>
    <property type="molecule type" value="Genomic_DNA"/>
</dbReference>
<dbReference type="PIR" id="A44978">
    <property type="entry name" value="A44978"/>
</dbReference>
<dbReference type="SMR" id="P12531"/>
<dbReference type="GO" id="GO:0020023">
    <property type="term" value="C:kinetoplast"/>
    <property type="evidence" value="ECO:0000314"/>
    <property type="project" value="GeneDB"/>
</dbReference>
<dbReference type="GO" id="GO:0005634">
    <property type="term" value="C:nucleus"/>
    <property type="evidence" value="ECO:0000247"/>
    <property type="project" value="GeneDB"/>
</dbReference>
<dbReference type="GO" id="GO:0005524">
    <property type="term" value="F:ATP binding"/>
    <property type="evidence" value="ECO:0007669"/>
    <property type="project" value="UniProtKB-KW"/>
</dbReference>
<dbReference type="GO" id="GO:0003677">
    <property type="term" value="F:DNA binding"/>
    <property type="evidence" value="ECO:0007669"/>
    <property type="project" value="UniProtKB-KW"/>
</dbReference>
<dbReference type="GO" id="GO:0003918">
    <property type="term" value="F:DNA topoisomerase type II (double strand cut, ATP-hydrolyzing) activity"/>
    <property type="evidence" value="ECO:0000255"/>
    <property type="project" value="GeneDB"/>
</dbReference>
<dbReference type="GO" id="GO:0046872">
    <property type="term" value="F:metal ion binding"/>
    <property type="evidence" value="ECO:0007669"/>
    <property type="project" value="UniProtKB-KW"/>
</dbReference>
<dbReference type="GO" id="GO:0006265">
    <property type="term" value="P:DNA topological change"/>
    <property type="evidence" value="ECO:0000255"/>
    <property type="project" value="GeneDB"/>
</dbReference>
<dbReference type="GO" id="GO:0000712">
    <property type="term" value="P:resolution of meiotic recombination intermediates"/>
    <property type="evidence" value="ECO:0007669"/>
    <property type="project" value="TreeGrafter"/>
</dbReference>
<dbReference type="GO" id="GO:0000819">
    <property type="term" value="P:sister chromatid segregation"/>
    <property type="evidence" value="ECO:0007669"/>
    <property type="project" value="TreeGrafter"/>
</dbReference>
<dbReference type="CDD" id="cd00187">
    <property type="entry name" value="TOP4c"/>
    <property type="match status" value="1"/>
</dbReference>
<dbReference type="CDD" id="cd03481">
    <property type="entry name" value="TopoIIA_Trans_ScTopoIIA"/>
    <property type="match status" value="1"/>
</dbReference>
<dbReference type="CDD" id="cd03365">
    <property type="entry name" value="TOPRIM_TopoIIA"/>
    <property type="match status" value="1"/>
</dbReference>
<dbReference type="FunFam" id="3.30.1490.30:FF:000001">
    <property type="entry name" value="DNA topoisomerase 2"/>
    <property type="match status" value="1"/>
</dbReference>
<dbReference type="FunFam" id="3.30.230.10:FF:000110">
    <property type="entry name" value="DNA topoisomerase 2"/>
    <property type="match status" value="1"/>
</dbReference>
<dbReference type="FunFam" id="3.30.565.10:FF:000092">
    <property type="entry name" value="DNA topoisomerase 2"/>
    <property type="match status" value="1"/>
</dbReference>
<dbReference type="FunFam" id="3.40.50.670:FF:000001">
    <property type="entry name" value="DNA topoisomerase 2"/>
    <property type="match status" value="1"/>
</dbReference>
<dbReference type="FunFam" id="3.90.199.10:FF:000002">
    <property type="entry name" value="DNA topoisomerase 2"/>
    <property type="match status" value="1"/>
</dbReference>
<dbReference type="Gene3D" id="3.30.1360.40">
    <property type="match status" value="1"/>
</dbReference>
<dbReference type="Gene3D" id="3.30.1490.30">
    <property type="match status" value="1"/>
</dbReference>
<dbReference type="Gene3D" id="3.30.230.10">
    <property type="match status" value="1"/>
</dbReference>
<dbReference type="Gene3D" id="3.40.50.670">
    <property type="match status" value="1"/>
</dbReference>
<dbReference type="Gene3D" id="3.30.565.10">
    <property type="entry name" value="Histidine kinase-like ATPase, C-terminal domain"/>
    <property type="match status" value="1"/>
</dbReference>
<dbReference type="Gene3D" id="3.90.199.10">
    <property type="entry name" value="Topoisomerase II, domain 5"/>
    <property type="match status" value="1"/>
</dbReference>
<dbReference type="Gene3D" id="1.10.268.10">
    <property type="entry name" value="Topoisomerase, domain 3"/>
    <property type="match status" value="1"/>
</dbReference>
<dbReference type="InterPro" id="IPR050634">
    <property type="entry name" value="DNA_Topoisomerase_II"/>
</dbReference>
<dbReference type="InterPro" id="IPR036890">
    <property type="entry name" value="HATPase_C_sf"/>
</dbReference>
<dbReference type="InterPro" id="IPR020568">
    <property type="entry name" value="Ribosomal_Su5_D2-typ_SF"/>
</dbReference>
<dbReference type="InterPro" id="IPR014721">
    <property type="entry name" value="Ribsml_uS5_D2-typ_fold_subgr"/>
</dbReference>
<dbReference type="InterPro" id="IPR001241">
    <property type="entry name" value="Topo_IIA"/>
</dbReference>
<dbReference type="InterPro" id="IPR013760">
    <property type="entry name" value="Topo_IIA-like_dom_sf"/>
</dbReference>
<dbReference type="InterPro" id="IPR013758">
    <property type="entry name" value="Topo_IIA_A/C_ab"/>
</dbReference>
<dbReference type="InterPro" id="IPR013757">
    <property type="entry name" value="Topo_IIA_A_a_sf"/>
</dbReference>
<dbReference type="InterPro" id="IPR013759">
    <property type="entry name" value="Topo_IIA_B_C"/>
</dbReference>
<dbReference type="InterPro" id="IPR013506">
    <property type="entry name" value="Topo_IIA_bsu_dom2"/>
</dbReference>
<dbReference type="InterPro" id="IPR002205">
    <property type="entry name" value="Topo_IIA_dom_A"/>
</dbReference>
<dbReference type="InterPro" id="IPR001154">
    <property type="entry name" value="TopoII_euk"/>
</dbReference>
<dbReference type="InterPro" id="IPR018522">
    <property type="entry name" value="TopoIIA_CS"/>
</dbReference>
<dbReference type="InterPro" id="IPR031660">
    <property type="entry name" value="TOPRIM_C"/>
</dbReference>
<dbReference type="InterPro" id="IPR006171">
    <property type="entry name" value="TOPRIM_dom"/>
</dbReference>
<dbReference type="InterPro" id="IPR034157">
    <property type="entry name" value="TOPRIM_TopoII"/>
</dbReference>
<dbReference type="PANTHER" id="PTHR10169:SF50">
    <property type="entry name" value="DNA TOPOISOMERASE 2"/>
    <property type="match status" value="1"/>
</dbReference>
<dbReference type="PANTHER" id="PTHR10169">
    <property type="entry name" value="DNA TOPOISOMERASE/GYRASE"/>
    <property type="match status" value="1"/>
</dbReference>
<dbReference type="Pfam" id="PF00204">
    <property type="entry name" value="DNA_gyraseB"/>
    <property type="match status" value="1"/>
</dbReference>
<dbReference type="Pfam" id="PF00521">
    <property type="entry name" value="DNA_topoisoIV"/>
    <property type="match status" value="1"/>
</dbReference>
<dbReference type="Pfam" id="PF01751">
    <property type="entry name" value="Toprim"/>
    <property type="match status" value="1"/>
</dbReference>
<dbReference type="Pfam" id="PF16898">
    <property type="entry name" value="TOPRIM_C"/>
    <property type="match status" value="1"/>
</dbReference>
<dbReference type="PRINTS" id="PR01158">
    <property type="entry name" value="TOPISMRASEII"/>
</dbReference>
<dbReference type="PRINTS" id="PR00418">
    <property type="entry name" value="TPI2FAMILY"/>
</dbReference>
<dbReference type="SMART" id="SM00433">
    <property type="entry name" value="TOP2c"/>
    <property type="match status" value="1"/>
</dbReference>
<dbReference type="SMART" id="SM00434">
    <property type="entry name" value="TOP4c"/>
    <property type="match status" value="1"/>
</dbReference>
<dbReference type="SUPFAM" id="SSF55874">
    <property type="entry name" value="ATPase domain of HSP90 chaperone/DNA topoisomerase II/histidine kinase"/>
    <property type="match status" value="1"/>
</dbReference>
<dbReference type="SUPFAM" id="SSF54211">
    <property type="entry name" value="Ribosomal protein S5 domain 2-like"/>
    <property type="match status" value="1"/>
</dbReference>
<dbReference type="SUPFAM" id="SSF56719">
    <property type="entry name" value="Type II DNA topoisomerase"/>
    <property type="match status" value="1"/>
</dbReference>
<dbReference type="PROSITE" id="PS52040">
    <property type="entry name" value="TOPO_IIA"/>
    <property type="match status" value="1"/>
</dbReference>
<dbReference type="PROSITE" id="PS00177">
    <property type="entry name" value="TOPOISOMERASE_II"/>
    <property type="match status" value="1"/>
</dbReference>
<dbReference type="PROSITE" id="PS50880">
    <property type="entry name" value="TOPRIM"/>
    <property type="match status" value="1"/>
</dbReference>
<sequence>MAEAHKYKKLTPIEHVLTRPEMYIGSLDTTATPMFIYDEQKGHMVWETVKLNHGLLKIVDEILLNASDNISNRSARMTYIRVTITDTGEITIENDGAGIPIVRSREHKLYIPEMVFGHLLTSSNYDDDNQNAVAGRHGYGAKLTNILSLSFSVCCRTNGREFHMSWQDHMRKATAPRVSNVGTKEKNVTRVKFLPDYERFGMKEKKISNDMKRVLYKRIMDLSAMFPNIQITLNGSSFGFKSFKDYATLYSAMTPKGEKPPPPYVYESKSGCVAFIPSVVPGVRRMFGVVNGVVTYNGGTHCNAAQDILTGCLDGVERELKKENKVMDTNRVLRHFTILVFLVQVQPKFDSQNKARLVSTPTMPRVPRQDVMKYLLRMPFLEAHVSTITGQLAQELNKEIGTGRRMSSKTLLTSITKLVDATSTRRDPKHTRTLIVTEGDSAKALAQNSLSSDQKRYTGVFPLRGKLLNVRNKNLKRLRNCKELQELFCALGLELDKDYTDADELRYQRILIMTDQDADGSHIKGLVINAFESLWPSLLVRNPGFISIFSTPIVKARLRDKSVVSFFSMKEFHKWQRSNANTPYTCKYYKGLGTSTTAEGKEYFKDMEKHTMRLLVDRSDHKLLDNVFDSQEVEWRKDWMTKANAFTGEVDIDRSKKMLTVTDFVHKEMVHFALVGNARALAHSVDGLKPSQRKIIWALMRRSGNEAAKVAQLSGYISEASAFHHGETSLQETMIKMAQSFTGGNNVNLLVPEGQFGSRQQLGNDHAAPRYIFTKLSKVARLLFPSEDDPLLDYIVEEGQQVEPNHYVPILPLLLCNGSVGIGFGFSSNIPPFHRLDVSAAVRAMISGERAKSVVRRLVPWAVGFQGEIRRGPEGEFIAVGTYTYCKGGRVHVTELPWTCSVEAFREHISYLATKDIVNRIADYSGANHVDIDVEVAQGAVNTYAECESELGLTQRIHINGTVFSPNGTLSPLESDLTPVLQWHYDRRLDLYKKRRQRNLTLLEQELAREKSTLKFVQHFGAGHIDFANATEATLEKVCSKLGLVRVDDSFDYILRKPITFYTKTSFENLLKKIAETERRIEALKKTTPVQLWLGELDQFDRFFQDHEKKMVEAILKERRQRSPPSDLLPGLQQPRLEVEEAKGGKKFEMRVQVRKYVPPPTKRGAGGRSDGDGGATAAGAAAAVGGRGEKKGPGRAGGVRRMVLDALAKRVTRLLPRLLF</sequence>
<keyword id="KW-0067">ATP-binding</keyword>
<keyword id="KW-0238">DNA-binding</keyword>
<keyword id="KW-0413">Isomerase</keyword>
<keyword id="KW-0460">Magnesium</keyword>
<keyword id="KW-0479">Metal-binding</keyword>
<keyword id="KW-0547">Nucleotide-binding</keyword>
<keyword id="KW-0539">Nucleus</keyword>
<keyword id="KW-0799">Topoisomerase</keyword>
<organism>
    <name type="scientific">Trypanosoma brucei brucei</name>
    <dbReference type="NCBI Taxonomy" id="5702"/>
    <lineage>
        <taxon>Eukaryota</taxon>
        <taxon>Discoba</taxon>
        <taxon>Euglenozoa</taxon>
        <taxon>Kinetoplastea</taxon>
        <taxon>Metakinetoplastina</taxon>
        <taxon>Trypanosomatida</taxon>
        <taxon>Trypanosomatidae</taxon>
        <taxon>Trypanosoma</taxon>
    </lineage>
</organism>
<gene>
    <name type="primary">TOP2</name>
</gene>
<accession>P12531</accession>
<name>TOP2_TRYBB</name>
<feature type="chain" id="PRO_0000145378" description="DNA topoisomerase 2">
    <location>
        <begin position="1"/>
        <end position="1221"/>
    </location>
</feature>
<feature type="domain" description="Toprim" evidence="3">
    <location>
        <begin position="432"/>
        <end position="546"/>
    </location>
</feature>
<feature type="domain" description="Topo IIA-type catalytic" evidence="4">
    <location>
        <begin position="681"/>
        <end position="1097"/>
    </location>
</feature>
<feature type="region of interest" description="Interaction with DNA" evidence="2">
    <location>
        <begin position="952"/>
        <end position="961"/>
    </location>
</feature>
<feature type="region of interest" description="Disordered" evidence="5">
    <location>
        <begin position="1158"/>
        <end position="1198"/>
    </location>
</feature>
<feature type="compositionally biased region" description="Gly residues" evidence="5">
    <location>
        <begin position="1165"/>
        <end position="1177"/>
    </location>
</feature>
<feature type="active site" description="O-(5'-phospho-DNA)-tyrosine intermediate" evidence="4">
    <location>
        <position position="771"/>
    </location>
</feature>
<feature type="binding site" evidence="2">
    <location>
        <position position="65"/>
    </location>
    <ligand>
        <name>ATP</name>
        <dbReference type="ChEBI" id="CHEBI:30616"/>
    </ligand>
</feature>
<feature type="binding site" evidence="2">
    <location>
        <position position="94"/>
    </location>
    <ligand>
        <name>ATP</name>
        <dbReference type="ChEBI" id="CHEBI:30616"/>
    </ligand>
</feature>
<feature type="binding site" evidence="2">
    <location>
        <begin position="122"/>
        <end position="124"/>
    </location>
    <ligand>
        <name>ATP</name>
        <dbReference type="ChEBI" id="CHEBI:30616"/>
    </ligand>
</feature>
<feature type="binding site" evidence="2">
    <location>
        <begin position="135"/>
        <end position="142"/>
    </location>
    <ligand>
        <name>ATP</name>
        <dbReference type="ChEBI" id="CHEBI:30616"/>
    </ligand>
</feature>
<feature type="binding site" evidence="2">
    <location>
        <begin position="352"/>
        <end position="354"/>
    </location>
    <ligand>
        <name>ATP</name>
        <dbReference type="ChEBI" id="CHEBI:30616"/>
    </ligand>
</feature>
<feature type="binding site" evidence="3">
    <location>
        <position position="438"/>
    </location>
    <ligand>
        <name>Mg(2+)</name>
        <dbReference type="ChEBI" id="CHEBI:18420"/>
        <label>1</label>
        <note>catalytic</note>
    </ligand>
</feature>
<feature type="binding site" evidence="3">
    <location>
        <position position="515"/>
    </location>
    <ligand>
        <name>Mg(2+)</name>
        <dbReference type="ChEBI" id="CHEBI:18420"/>
        <label>1</label>
        <note>catalytic</note>
    </ligand>
</feature>
<feature type="binding site" evidence="3">
    <location>
        <position position="515"/>
    </location>
    <ligand>
        <name>Mg(2+)</name>
        <dbReference type="ChEBI" id="CHEBI:18420"/>
        <label>2</label>
    </ligand>
</feature>
<feature type="binding site" evidence="3">
    <location>
        <position position="517"/>
    </location>
    <ligand>
        <name>Mg(2+)</name>
        <dbReference type="ChEBI" id="CHEBI:18420"/>
        <label>2</label>
    </ligand>
</feature>
<feature type="site" description="Interaction with DNA" evidence="3">
    <location>
        <position position="466"/>
    </location>
</feature>
<feature type="site" description="Interaction with DNA" evidence="3">
    <location>
        <position position="469"/>
    </location>
</feature>
<feature type="site" description="Interaction with DNA" evidence="3">
    <location>
        <position position="636"/>
    </location>
</feature>
<feature type="site" description="Interaction with DNA" evidence="3">
    <location>
        <position position="637"/>
    </location>
</feature>
<feature type="site" description="Interaction with DNA" evidence="3">
    <location>
        <position position="689"/>
    </location>
</feature>
<feature type="site" description="Interaction with DNA" evidence="3">
    <location>
        <position position="729"/>
    </location>
</feature>
<feature type="site" description="Transition state stabilizer" evidence="1">
    <location>
        <position position="770"/>
    </location>
</feature>
<feature type="site" description="Important for DNA bending; intercalates between base pairs of target DNA" evidence="1">
    <location>
        <position position="822"/>
    </location>
</feature>
<reference key="1">
    <citation type="journal article" date="1990" name="Mol. Biochem. Parasitol.">
        <title>The TOP2 gene of Trypanosoma brucei: a single-copy gene that shares extensive homology with other TOP2 genes encoding eukaryotic DNA topoisomerase II.</title>
        <authorList>
            <person name="Strauss P.R."/>
            <person name="Wang J.C."/>
        </authorList>
    </citation>
    <scope>NUCLEOTIDE SEQUENCE [GENOMIC DNA]</scope>
</reference>
<evidence type="ECO:0000250" key="1"/>
<evidence type="ECO:0000250" key="2">
    <source>
        <dbReference type="UniProtKB" id="P11388"/>
    </source>
</evidence>
<evidence type="ECO:0000255" key="3">
    <source>
        <dbReference type="PROSITE-ProRule" id="PRU00995"/>
    </source>
</evidence>
<evidence type="ECO:0000255" key="4">
    <source>
        <dbReference type="PROSITE-ProRule" id="PRU01384"/>
    </source>
</evidence>
<evidence type="ECO:0000256" key="5">
    <source>
        <dbReference type="SAM" id="MobiDB-lite"/>
    </source>
</evidence>
<evidence type="ECO:0000305" key="6"/>
<proteinExistence type="inferred from homology"/>
<comment type="function">
    <text>Control of topological states of DNA by transient breakage and subsequent rejoining of DNA strands. Topoisomerase II makes double-strand breaks.</text>
</comment>
<comment type="catalytic activity">
    <reaction evidence="3">
        <text>ATP-dependent breakage, passage and rejoining of double-stranded DNA.</text>
        <dbReference type="EC" id="5.6.2.2"/>
    </reaction>
</comment>
<comment type="cofactor">
    <cofactor evidence="3">
        <name>Mg(2+)</name>
        <dbReference type="ChEBI" id="CHEBI:18420"/>
    </cofactor>
    <cofactor evidence="3">
        <name>Mn(2+)</name>
        <dbReference type="ChEBI" id="CHEBI:29035"/>
    </cofactor>
    <cofactor evidence="3">
        <name>Ca(2+)</name>
        <dbReference type="ChEBI" id="CHEBI:29108"/>
    </cofactor>
    <text evidence="3">Binds two Mg(2+) per subunit. The magnesium ions form salt bridges with both the protein and the DNA. Can also accept other divalent metal cations, such as Mn(2+) or Ca(2+).</text>
</comment>
<comment type="subunit">
    <text>Homodimer.</text>
</comment>
<comment type="subcellular location">
    <subcellularLocation>
        <location>Nucleus</location>
    </subcellularLocation>
</comment>
<comment type="miscellaneous">
    <text>Eukaryotic topoisomerase I and II can relax both negative and positive supercoils, whereas prokaryotic enzymes relax only negative supercoils.</text>
</comment>
<comment type="similarity">
    <text evidence="6">Belongs to the type II topoisomerase family.</text>
</comment>